<accession>A5U7L9</accession>
<evidence type="ECO:0000255" key="1">
    <source>
        <dbReference type="HAMAP-Rule" id="MF_00297"/>
    </source>
</evidence>
<organism>
    <name type="scientific">Mycobacterium tuberculosis (strain ATCC 25177 / H37Ra)</name>
    <dbReference type="NCBI Taxonomy" id="419947"/>
    <lineage>
        <taxon>Bacteria</taxon>
        <taxon>Bacillati</taxon>
        <taxon>Actinomycetota</taxon>
        <taxon>Actinomycetes</taxon>
        <taxon>Mycobacteriales</taxon>
        <taxon>Mycobacteriaceae</taxon>
        <taxon>Mycobacterium</taxon>
        <taxon>Mycobacterium tuberculosis complex</taxon>
    </lineage>
</organism>
<gene>
    <name evidence="1" type="primary">nudC</name>
    <name type="ordered locus">MRA_3236</name>
</gene>
<protein>
    <recommendedName>
        <fullName evidence="1">NAD-capped RNA hydrolase NudC</fullName>
        <shortName evidence="1">DeNADding enzyme NudC</shortName>
        <ecNumber evidence="1">3.6.1.-</ecNumber>
    </recommendedName>
    <alternativeName>
        <fullName evidence="1">NADH pyrophosphatase</fullName>
        <ecNumber evidence="1">3.6.1.22</ecNumber>
    </alternativeName>
</protein>
<sequence>MTNVSGVDFQLRSVPLLSRVGADRADRLRTDMEAAAAGWPGAALLRVDSRNRVLVANGRVLLGAAIELADKPPPEAVFLGRVEGGRHVWAVRAALQPIADPDIPAEAVDLRGLGRIMDDTSSQLVSSASALLNWHDNARFSALDGAPTKPARAGWSRVNPITGHEEFPRIDPAVICLVHDGADRAVLARQAAWPERMFSLLAGFVEAGESFEVCVAREIREEIGLTVRDVRYLGSQQWPFPRSLMVGFHALGDPDEEFSFSDGEIAEAAWFTRDEVRAALAAGDWSSASESKLLLPGSISIARVIIESWAACE</sequence>
<dbReference type="EC" id="3.6.1.-" evidence="1"/>
<dbReference type="EC" id="3.6.1.22" evidence="1"/>
<dbReference type="EMBL" id="CP000611">
    <property type="protein sequence ID" value="ABQ75019.1"/>
    <property type="molecule type" value="Genomic_DNA"/>
</dbReference>
<dbReference type="RefSeq" id="WP_003899965.1">
    <property type="nucleotide sequence ID" value="NZ_CP016972.1"/>
</dbReference>
<dbReference type="SMR" id="A5U7L9"/>
<dbReference type="KEGG" id="mra:MRA_3236"/>
<dbReference type="eggNOG" id="COG2816">
    <property type="taxonomic scope" value="Bacteria"/>
</dbReference>
<dbReference type="HOGENOM" id="CLU_037162_0_4_11"/>
<dbReference type="Proteomes" id="UP000001988">
    <property type="component" value="Chromosome"/>
</dbReference>
<dbReference type="GO" id="GO:0005829">
    <property type="term" value="C:cytosol"/>
    <property type="evidence" value="ECO:0007669"/>
    <property type="project" value="TreeGrafter"/>
</dbReference>
<dbReference type="GO" id="GO:0000287">
    <property type="term" value="F:magnesium ion binding"/>
    <property type="evidence" value="ECO:0007669"/>
    <property type="project" value="UniProtKB-UniRule"/>
</dbReference>
<dbReference type="GO" id="GO:0030145">
    <property type="term" value="F:manganese ion binding"/>
    <property type="evidence" value="ECO:0007669"/>
    <property type="project" value="UniProtKB-UniRule"/>
</dbReference>
<dbReference type="GO" id="GO:0000210">
    <property type="term" value="F:NAD+ diphosphatase activity"/>
    <property type="evidence" value="ECO:0007669"/>
    <property type="project" value="UniProtKB-UniRule"/>
</dbReference>
<dbReference type="GO" id="GO:0035529">
    <property type="term" value="F:NADH pyrophosphatase activity"/>
    <property type="evidence" value="ECO:0007669"/>
    <property type="project" value="TreeGrafter"/>
</dbReference>
<dbReference type="GO" id="GO:0110153">
    <property type="term" value="F:RNA NAD-cap (NMN-forming) hydrolase activity"/>
    <property type="evidence" value="ECO:0007669"/>
    <property type="project" value="RHEA"/>
</dbReference>
<dbReference type="GO" id="GO:0019677">
    <property type="term" value="P:NAD catabolic process"/>
    <property type="evidence" value="ECO:0007669"/>
    <property type="project" value="TreeGrafter"/>
</dbReference>
<dbReference type="GO" id="GO:0006734">
    <property type="term" value="P:NADH metabolic process"/>
    <property type="evidence" value="ECO:0007669"/>
    <property type="project" value="TreeGrafter"/>
</dbReference>
<dbReference type="GO" id="GO:0006742">
    <property type="term" value="P:NADP catabolic process"/>
    <property type="evidence" value="ECO:0007669"/>
    <property type="project" value="TreeGrafter"/>
</dbReference>
<dbReference type="CDD" id="cd03429">
    <property type="entry name" value="NUDIX_NADH_pyrophosphatase_Nudt13"/>
    <property type="match status" value="1"/>
</dbReference>
<dbReference type="FunFam" id="3.90.79.10:FF:000048">
    <property type="entry name" value="NADH pyrophosphatase"/>
    <property type="match status" value="1"/>
</dbReference>
<dbReference type="Gene3D" id="3.90.79.20">
    <property type="match status" value="1"/>
</dbReference>
<dbReference type="Gene3D" id="3.90.79.10">
    <property type="entry name" value="Nucleoside Triphosphate Pyrophosphohydrolase"/>
    <property type="match status" value="1"/>
</dbReference>
<dbReference type="HAMAP" id="MF_00297">
    <property type="entry name" value="Nudix_NudC"/>
    <property type="match status" value="1"/>
</dbReference>
<dbReference type="InterPro" id="IPR050241">
    <property type="entry name" value="NAD-cap_RNA_hydrolase_NudC"/>
</dbReference>
<dbReference type="InterPro" id="IPR015375">
    <property type="entry name" value="NADH_PPase-like_N"/>
</dbReference>
<dbReference type="InterPro" id="IPR049734">
    <property type="entry name" value="NudC-like_C"/>
</dbReference>
<dbReference type="InterPro" id="IPR015797">
    <property type="entry name" value="NUDIX_hydrolase-like_dom_sf"/>
</dbReference>
<dbReference type="InterPro" id="IPR020084">
    <property type="entry name" value="NUDIX_hydrolase_CS"/>
</dbReference>
<dbReference type="InterPro" id="IPR000086">
    <property type="entry name" value="NUDIX_hydrolase_dom"/>
</dbReference>
<dbReference type="InterPro" id="IPR022925">
    <property type="entry name" value="RNA_Hydrolase_NudC"/>
</dbReference>
<dbReference type="InterPro" id="IPR015376">
    <property type="entry name" value="Znr_NADH_PPase"/>
</dbReference>
<dbReference type="NCBIfam" id="NF001299">
    <property type="entry name" value="PRK00241.1"/>
    <property type="match status" value="1"/>
</dbReference>
<dbReference type="PANTHER" id="PTHR42904:SF6">
    <property type="entry name" value="NAD-CAPPED RNA HYDROLASE NUDT12"/>
    <property type="match status" value="1"/>
</dbReference>
<dbReference type="PANTHER" id="PTHR42904">
    <property type="entry name" value="NUDIX HYDROLASE, NUDC SUBFAMILY"/>
    <property type="match status" value="1"/>
</dbReference>
<dbReference type="Pfam" id="PF00293">
    <property type="entry name" value="NUDIX"/>
    <property type="match status" value="1"/>
</dbReference>
<dbReference type="Pfam" id="PF09296">
    <property type="entry name" value="NUDIX-like"/>
    <property type="match status" value="1"/>
</dbReference>
<dbReference type="Pfam" id="PF09297">
    <property type="entry name" value="Zn_ribbon_NUD"/>
    <property type="match status" value="1"/>
</dbReference>
<dbReference type="SUPFAM" id="SSF55811">
    <property type="entry name" value="Nudix"/>
    <property type="match status" value="1"/>
</dbReference>
<dbReference type="PROSITE" id="PS51462">
    <property type="entry name" value="NUDIX"/>
    <property type="match status" value="1"/>
</dbReference>
<dbReference type="PROSITE" id="PS00893">
    <property type="entry name" value="NUDIX_BOX"/>
    <property type="match status" value="1"/>
</dbReference>
<reference key="1">
    <citation type="journal article" date="2008" name="PLoS ONE">
        <title>Genetic basis of virulence attenuation revealed by comparative genomic analysis of Mycobacterium tuberculosis strain H37Ra versus H37Rv.</title>
        <authorList>
            <person name="Zheng H."/>
            <person name="Lu L."/>
            <person name="Wang B."/>
            <person name="Pu S."/>
            <person name="Zhang X."/>
            <person name="Zhu G."/>
            <person name="Shi W."/>
            <person name="Zhang L."/>
            <person name="Wang H."/>
            <person name="Wang S."/>
            <person name="Zhao G."/>
            <person name="Zhang Y."/>
        </authorList>
    </citation>
    <scope>NUCLEOTIDE SEQUENCE [LARGE SCALE GENOMIC DNA]</scope>
    <source>
        <strain>ATCC 25177 / H37Ra</strain>
    </source>
</reference>
<keyword id="KW-0378">Hydrolase</keyword>
<keyword id="KW-0460">Magnesium</keyword>
<keyword id="KW-0464">Manganese</keyword>
<keyword id="KW-0479">Metal-binding</keyword>
<keyword id="KW-0520">NAD</keyword>
<keyword id="KW-1185">Reference proteome</keyword>
<name>NUDC_MYCTA</name>
<comment type="function">
    <text evidence="1">mRNA decapping enzyme that specifically removes the nicotinamide adenine dinucleotide (NAD) cap from a subset of mRNAs by hydrolyzing the diphosphate linkage to produce nicotinamide mononucleotide (NMN) and 5' monophosphate mRNA. The NAD-cap is present at the 5'-end of some mRNAs and stabilizes RNA against 5'-processing. Has preference for mRNAs with a 5'-end purine. Catalyzes the hydrolysis of a broad range of dinucleotide pyrophosphates.</text>
</comment>
<comment type="catalytic activity">
    <reaction evidence="1">
        <text>a 5'-end NAD(+)-phospho-ribonucleoside in mRNA + H2O = a 5'-end phospho-adenosine-phospho-ribonucleoside in mRNA + beta-nicotinamide D-ribonucleotide + 2 H(+)</text>
        <dbReference type="Rhea" id="RHEA:60876"/>
        <dbReference type="Rhea" id="RHEA-COMP:15698"/>
        <dbReference type="Rhea" id="RHEA-COMP:15719"/>
        <dbReference type="ChEBI" id="CHEBI:14649"/>
        <dbReference type="ChEBI" id="CHEBI:15377"/>
        <dbReference type="ChEBI" id="CHEBI:15378"/>
        <dbReference type="ChEBI" id="CHEBI:144029"/>
        <dbReference type="ChEBI" id="CHEBI:144051"/>
    </reaction>
    <physiologicalReaction direction="left-to-right" evidence="1">
        <dbReference type="Rhea" id="RHEA:60877"/>
    </physiologicalReaction>
</comment>
<comment type="catalytic activity">
    <reaction evidence="1">
        <text>NAD(+) + H2O = beta-nicotinamide D-ribonucleotide + AMP + 2 H(+)</text>
        <dbReference type="Rhea" id="RHEA:11800"/>
        <dbReference type="ChEBI" id="CHEBI:14649"/>
        <dbReference type="ChEBI" id="CHEBI:15377"/>
        <dbReference type="ChEBI" id="CHEBI:15378"/>
        <dbReference type="ChEBI" id="CHEBI:57540"/>
        <dbReference type="ChEBI" id="CHEBI:456215"/>
        <dbReference type="EC" id="3.6.1.22"/>
    </reaction>
</comment>
<comment type="catalytic activity">
    <reaction evidence="1">
        <text>NADH + H2O = reduced beta-nicotinamide D-ribonucleotide + AMP + 2 H(+)</text>
        <dbReference type="Rhea" id="RHEA:48868"/>
        <dbReference type="ChEBI" id="CHEBI:15377"/>
        <dbReference type="ChEBI" id="CHEBI:15378"/>
        <dbReference type="ChEBI" id="CHEBI:57945"/>
        <dbReference type="ChEBI" id="CHEBI:90832"/>
        <dbReference type="ChEBI" id="CHEBI:456215"/>
        <dbReference type="EC" id="3.6.1.22"/>
    </reaction>
</comment>
<comment type="cofactor">
    <cofactor evidence="1">
        <name>Mg(2+)</name>
        <dbReference type="ChEBI" id="CHEBI:18420"/>
    </cofactor>
    <cofactor evidence="1">
        <name>Mn(2+)</name>
        <dbReference type="ChEBI" id="CHEBI:29035"/>
    </cofactor>
    <text evidence="1">Divalent metal cations. Mg(2+) or Mn(2+).</text>
</comment>
<comment type="subunit">
    <text evidence="1">Homodimer.</text>
</comment>
<comment type="similarity">
    <text evidence="1">Belongs to the Nudix hydrolase family. NudC subfamily.</text>
</comment>
<feature type="chain" id="PRO_1000021910" description="NAD-capped RNA hydrolase NudC">
    <location>
        <begin position="1"/>
        <end position="313"/>
    </location>
</feature>
<feature type="domain" description="Nudix hydrolase" evidence="1">
    <location>
        <begin position="168"/>
        <end position="293"/>
    </location>
</feature>
<feature type="short sequence motif" description="Nudix box" evidence="1">
    <location>
        <begin position="203"/>
        <end position="224"/>
    </location>
</feature>
<feature type="binding site" evidence="1">
    <location>
        <position position="111"/>
    </location>
    <ligand>
        <name>substrate</name>
    </ligand>
</feature>
<feature type="binding site" evidence="1">
    <location>
        <position position="202"/>
    </location>
    <ligand>
        <name>a divalent metal cation</name>
        <dbReference type="ChEBI" id="CHEBI:60240"/>
        <label>1</label>
    </ligand>
</feature>
<feature type="binding site" evidence="1">
    <location>
        <position position="218"/>
    </location>
    <ligand>
        <name>a divalent metal cation</name>
        <dbReference type="ChEBI" id="CHEBI:60240"/>
        <label>2</label>
    </ligand>
</feature>
<feature type="binding site" evidence="1">
    <location>
        <position position="218"/>
    </location>
    <ligand>
        <name>a divalent metal cation</name>
        <dbReference type="ChEBI" id="CHEBI:60240"/>
        <label>3</label>
    </ligand>
</feature>
<feature type="binding site" evidence="1">
    <location>
        <position position="222"/>
    </location>
    <ligand>
        <name>a divalent metal cation</name>
        <dbReference type="ChEBI" id="CHEBI:60240"/>
        <label>1</label>
    </ligand>
</feature>
<feature type="binding site" evidence="1">
    <location>
        <position position="222"/>
    </location>
    <ligand>
        <name>a divalent metal cation</name>
        <dbReference type="ChEBI" id="CHEBI:60240"/>
        <label>3</label>
    </ligand>
</feature>
<feature type="binding site" evidence="1">
    <location>
        <begin position="236"/>
        <end position="243"/>
    </location>
    <ligand>
        <name>substrate</name>
    </ligand>
</feature>
<feature type="binding site" evidence="1">
    <location>
        <position position="264"/>
    </location>
    <ligand>
        <name>a divalent metal cation</name>
        <dbReference type="ChEBI" id="CHEBI:60240"/>
        <label>1</label>
    </ligand>
</feature>
<feature type="binding site" evidence="1">
    <location>
        <position position="264"/>
    </location>
    <ligand>
        <name>a divalent metal cation</name>
        <dbReference type="ChEBI" id="CHEBI:60240"/>
        <label>3</label>
    </ligand>
</feature>
<proteinExistence type="inferred from homology"/>